<dbReference type="EC" id="2.3.1.47" evidence="1"/>
<dbReference type="EMBL" id="AE008923">
    <property type="protein sequence ID" value="AAM35279.1"/>
    <property type="molecule type" value="Genomic_DNA"/>
</dbReference>
<dbReference type="SMR" id="Q8PQD8"/>
<dbReference type="KEGG" id="xac:XAC0387"/>
<dbReference type="eggNOG" id="COG0156">
    <property type="taxonomic scope" value="Bacteria"/>
</dbReference>
<dbReference type="HOGENOM" id="CLU_015846_11_2_6"/>
<dbReference type="UniPathway" id="UPA00078"/>
<dbReference type="Proteomes" id="UP000000576">
    <property type="component" value="Chromosome"/>
</dbReference>
<dbReference type="GO" id="GO:0008710">
    <property type="term" value="F:8-amino-7-oxononanoate synthase activity"/>
    <property type="evidence" value="ECO:0007669"/>
    <property type="project" value="UniProtKB-UniRule"/>
</dbReference>
<dbReference type="GO" id="GO:0030170">
    <property type="term" value="F:pyridoxal phosphate binding"/>
    <property type="evidence" value="ECO:0007669"/>
    <property type="project" value="UniProtKB-UniRule"/>
</dbReference>
<dbReference type="GO" id="GO:0009102">
    <property type="term" value="P:biotin biosynthetic process"/>
    <property type="evidence" value="ECO:0007669"/>
    <property type="project" value="UniProtKB-UniRule"/>
</dbReference>
<dbReference type="Gene3D" id="3.90.1150.10">
    <property type="entry name" value="Aspartate Aminotransferase, domain 1"/>
    <property type="match status" value="1"/>
</dbReference>
<dbReference type="Gene3D" id="3.40.640.10">
    <property type="entry name" value="Type I PLP-dependent aspartate aminotransferase-like (Major domain)"/>
    <property type="match status" value="1"/>
</dbReference>
<dbReference type="HAMAP" id="MF_01693">
    <property type="entry name" value="BioF_aminotrans_2"/>
    <property type="match status" value="1"/>
</dbReference>
<dbReference type="InterPro" id="IPR004839">
    <property type="entry name" value="Aminotransferase_I/II_large"/>
</dbReference>
<dbReference type="InterPro" id="IPR050087">
    <property type="entry name" value="AON_synthase_class-II"/>
</dbReference>
<dbReference type="InterPro" id="IPR004723">
    <property type="entry name" value="AONS_Archaea/Proteobacteria"/>
</dbReference>
<dbReference type="InterPro" id="IPR022834">
    <property type="entry name" value="AONS_Proteobacteria"/>
</dbReference>
<dbReference type="InterPro" id="IPR015424">
    <property type="entry name" value="PyrdxlP-dep_Trfase"/>
</dbReference>
<dbReference type="InterPro" id="IPR015421">
    <property type="entry name" value="PyrdxlP-dep_Trfase_major"/>
</dbReference>
<dbReference type="InterPro" id="IPR015422">
    <property type="entry name" value="PyrdxlP-dep_Trfase_small"/>
</dbReference>
<dbReference type="NCBIfam" id="TIGR00858">
    <property type="entry name" value="bioF"/>
    <property type="match status" value="1"/>
</dbReference>
<dbReference type="PANTHER" id="PTHR13693:SF100">
    <property type="entry name" value="8-AMINO-7-OXONONANOATE SYNTHASE"/>
    <property type="match status" value="1"/>
</dbReference>
<dbReference type="PANTHER" id="PTHR13693">
    <property type="entry name" value="CLASS II AMINOTRANSFERASE/8-AMINO-7-OXONONANOATE SYNTHASE"/>
    <property type="match status" value="1"/>
</dbReference>
<dbReference type="Pfam" id="PF00155">
    <property type="entry name" value="Aminotran_1_2"/>
    <property type="match status" value="1"/>
</dbReference>
<dbReference type="SUPFAM" id="SSF53383">
    <property type="entry name" value="PLP-dependent transferases"/>
    <property type="match status" value="1"/>
</dbReference>
<dbReference type="PROSITE" id="PS00599">
    <property type="entry name" value="AA_TRANSFER_CLASS_2"/>
    <property type="match status" value="1"/>
</dbReference>
<gene>
    <name evidence="1" type="primary">bioF</name>
    <name type="ordered locus">XAC0387</name>
</gene>
<evidence type="ECO:0000255" key="1">
    <source>
        <dbReference type="HAMAP-Rule" id="MF_01693"/>
    </source>
</evidence>
<comment type="function">
    <text evidence="1">Catalyzes the decarboxylative condensation of pimeloyl-[acyl-carrier protein] and L-alanine to produce 8-amino-7-oxononanoate (AON), [acyl-carrier protein], and carbon dioxide.</text>
</comment>
<comment type="catalytic activity">
    <reaction evidence="1">
        <text>6-carboxyhexanoyl-[ACP] + L-alanine + H(+) = (8S)-8-amino-7-oxononanoate + holo-[ACP] + CO2</text>
        <dbReference type="Rhea" id="RHEA:42288"/>
        <dbReference type="Rhea" id="RHEA-COMP:9685"/>
        <dbReference type="Rhea" id="RHEA-COMP:9955"/>
        <dbReference type="ChEBI" id="CHEBI:15378"/>
        <dbReference type="ChEBI" id="CHEBI:16526"/>
        <dbReference type="ChEBI" id="CHEBI:57972"/>
        <dbReference type="ChEBI" id="CHEBI:64479"/>
        <dbReference type="ChEBI" id="CHEBI:78846"/>
        <dbReference type="ChEBI" id="CHEBI:149468"/>
        <dbReference type="EC" id="2.3.1.47"/>
    </reaction>
</comment>
<comment type="cofactor">
    <cofactor evidence="1">
        <name>pyridoxal 5'-phosphate</name>
        <dbReference type="ChEBI" id="CHEBI:597326"/>
    </cofactor>
</comment>
<comment type="pathway">
    <text evidence="1">Cofactor biosynthesis; biotin biosynthesis.</text>
</comment>
<comment type="subunit">
    <text evidence="1">Homodimer.</text>
</comment>
<comment type="similarity">
    <text evidence="1">Belongs to the class-II pyridoxal-phosphate-dependent aminotransferase family. BioF subfamily.</text>
</comment>
<proteinExistence type="inferred from homology"/>
<feature type="chain" id="PRO_0000381140" description="8-amino-7-oxononanoate synthase">
    <location>
        <begin position="1"/>
        <end position="401"/>
    </location>
</feature>
<feature type="binding site" evidence="1">
    <location>
        <position position="24"/>
    </location>
    <ligand>
        <name>substrate</name>
    </ligand>
</feature>
<feature type="binding site" evidence="1">
    <location>
        <begin position="111"/>
        <end position="112"/>
    </location>
    <ligand>
        <name>pyridoxal 5'-phosphate</name>
        <dbReference type="ChEBI" id="CHEBI:597326"/>
    </ligand>
</feature>
<feature type="binding site" evidence="1">
    <location>
        <position position="137"/>
    </location>
    <ligand>
        <name>substrate</name>
    </ligand>
</feature>
<feature type="binding site" evidence="1">
    <location>
        <position position="183"/>
    </location>
    <ligand>
        <name>pyridoxal 5'-phosphate</name>
        <dbReference type="ChEBI" id="CHEBI:597326"/>
    </ligand>
</feature>
<feature type="binding site" evidence="1">
    <location>
        <position position="211"/>
    </location>
    <ligand>
        <name>pyridoxal 5'-phosphate</name>
        <dbReference type="ChEBI" id="CHEBI:597326"/>
    </ligand>
</feature>
<feature type="binding site" evidence="1">
    <location>
        <position position="240"/>
    </location>
    <ligand>
        <name>pyridoxal 5'-phosphate</name>
        <dbReference type="ChEBI" id="CHEBI:597326"/>
    </ligand>
</feature>
<feature type="binding site" evidence="1">
    <location>
        <position position="357"/>
    </location>
    <ligand>
        <name>substrate</name>
    </ligand>
</feature>
<feature type="modified residue" description="N6-(pyridoxal phosphate)lysine" evidence="1">
    <location>
        <position position="243"/>
    </location>
</feature>
<name>BIOF_XANAC</name>
<sequence length="401" mass="43182">MARPDLHERISSLRKLRVAQERVRVRRQVGRRDGVRLEIDGRWLTGFCSNDYLGLSQQFEVVAALQDAAARDGAGATASHLICGHHTAHETLEREIAEWLGYPSALLFGSGFIANLAVQQALLSEEDDVCVQDRLNHASLLDATRLAGCRLRRYPHLDVEGAMRQLKGAPEGAAMLATDGVFSMDGDVAPLRALSLVARMQQALFYVDDAHGVGVLGPQGRGCVADAGLGVAEVPLQLVTLGKALGGYGAVVVGEEALVRHLAETARPYIYTTALPPAQVAATLAAVRLARRDDWRRARLVELIGAFRDGARKHGFELMASDTPIQPLLCGEEATVMAMSAALEHAGFMVGAIRPPTVPEGKARLRVTLSALHTQQQVQALIEAIVQARDVVSRQPLRASA</sequence>
<organism>
    <name type="scientific">Xanthomonas axonopodis pv. citri (strain 306)</name>
    <dbReference type="NCBI Taxonomy" id="190486"/>
    <lineage>
        <taxon>Bacteria</taxon>
        <taxon>Pseudomonadati</taxon>
        <taxon>Pseudomonadota</taxon>
        <taxon>Gammaproteobacteria</taxon>
        <taxon>Lysobacterales</taxon>
        <taxon>Lysobacteraceae</taxon>
        <taxon>Xanthomonas</taxon>
    </lineage>
</organism>
<keyword id="KW-0093">Biotin biosynthesis</keyword>
<keyword id="KW-0663">Pyridoxal phosphate</keyword>
<keyword id="KW-0808">Transferase</keyword>
<reference key="1">
    <citation type="journal article" date="2002" name="Nature">
        <title>Comparison of the genomes of two Xanthomonas pathogens with differing host specificities.</title>
        <authorList>
            <person name="da Silva A.C.R."/>
            <person name="Ferro J.A."/>
            <person name="Reinach F.C."/>
            <person name="Farah C.S."/>
            <person name="Furlan L.R."/>
            <person name="Quaggio R.B."/>
            <person name="Monteiro-Vitorello C.B."/>
            <person name="Van Sluys M.A."/>
            <person name="Almeida N.F. Jr."/>
            <person name="Alves L.M.C."/>
            <person name="do Amaral A.M."/>
            <person name="Bertolini M.C."/>
            <person name="Camargo L.E.A."/>
            <person name="Camarotte G."/>
            <person name="Cannavan F."/>
            <person name="Cardozo J."/>
            <person name="Chambergo F."/>
            <person name="Ciapina L.P."/>
            <person name="Cicarelli R.M.B."/>
            <person name="Coutinho L.L."/>
            <person name="Cursino-Santos J.R."/>
            <person name="El-Dorry H."/>
            <person name="Faria J.B."/>
            <person name="Ferreira A.J.S."/>
            <person name="Ferreira R.C.C."/>
            <person name="Ferro M.I.T."/>
            <person name="Formighieri E.F."/>
            <person name="Franco M.C."/>
            <person name="Greggio C.C."/>
            <person name="Gruber A."/>
            <person name="Katsuyama A.M."/>
            <person name="Kishi L.T."/>
            <person name="Leite R.P."/>
            <person name="Lemos E.G.M."/>
            <person name="Lemos M.V.F."/>
            <person name="Locali E.C."/>
            <person name="Machado M.A."/>
            <person name="Madeira A.M.B.N."/>
            <person name="Martinez-Rossi N.M."/>
            <person name="Martins E.C."/>
            <person name="Meidanis J."/>
            <person name="Menck C.F.M."/>
            <person name="Miyaki C.Y."/>
            <person name="Moon D.H."/>
            <person name="Moreira L.M."/>
            <person name="Novo M.T.M."/>
            <person name="Okura V.K."/>
            <person name="Oliveira M.C."/>
            <person name="Oliveira V.R."/>
            <person name="Pereira H.A."/>
            <person name="Rossi A."/>
            <person name="Sena J.A.D."/>
            <person name="Silva C."/>
            <person name="de Souza R.F."/>
            <person name="Spinola L.A.F."/>
            <person name="Takita M.A."/>
            <person name="Tamura R.E."/>
            <person name="Teixeira E.C."/>
            <person name="Tezza R.I.D."/>
            <person name="Trindade dos Santos M."/>
            <person name="Truffi D."/>
            <person name="Tsai S.M."/>
            <person name="White F.F."/>
            <person name="Setubal J.C."/>
            <person name="Kitajima J.P."/>
        </authorList>
    </citation>
    <scope>NUCLEOTIDE SEQUENCE [LARGE SCALE GENOMIC DNA]</scope>
    <source>
        <strain>306</strain>
    </source>
</reference>
<accession>Q8PQD8</accession>
<protein>
    <recommendedName>
        <fullName evidence="1">8-amino-7-oxononanoate synthase</fullName>
        <shortName evidence="1">AONS</shortName>
        <ecNumber evidence="1">2.3.1.47</ecNumber>
    </recommendedName>
    <alternativeName>
        <fullName evidence="1">7-keto-8-amino-pelargonic acid synthase</fullName>
        <shortName evidence="1">7-KAP synthase</shortName>
        <shortName evidence="1">KAPA synthase</shortName>
    </alternativeName>
    <alternativeName>
        <fullName evidence="1">8-amino-7-ketopelargonate synthase</fullName>
    </alternativeName>
</protein>